<reference key="1">
    <citation type="journal article" date="2006" name="J. Bacteriol.">
        <title>Complete genome sequence of Yersinia pestis strains Antiqua and Nepal516: evidence of gene reduction in an emerging pathogen.</title>
        <authorList>
            <person name="Chain P.S.G."/>
            <person name="Hu P."/>
            <person name="Malfatti S.A."/>
            <person name="Radnedge L."/>
            <person name="Larimer F."/>
            <person name="Vergez L.M."/>
            <person name="Worsham P."/>
            <person name="Chu M.C."/>
            <person name="Andersen G.L."/>
        </authorList>
    </citation>
    <scope>NUCLEOTIDE SEQUENCE [LARGE SCALE GENOMIC DNA]</scope>
    <source>
        <strain>Antiqua</strain>
    </source>
</reference>
<sequence length="131" mass="13959">MSALKYCLLVTGPAYGTQQASSAYQFAQAVVGAGHHLVSIFFYREGVLNANQLTAPASDEFDLVRAWQQLAAEQAVTLNVCVAAALRRGITDQHEAEQLNLAAANLQPGFTLSGLGALAEATLTCDRMVQF</sequence>
<keyword id="KW-0963">Cytoplasm</keyword>
<keyword id="KW-0808">Transferase</keyword>
<keyword id="KW-0819">tRNA processing</keyword>
<organism>
    <name type="scientific">Yersinia pestis bv. Antiqua (strain Antiqua)</name>
    <dbReference type="NCBI Taxonomy" id="360102"/>
    <lineage>
        <taxon>Bacteria</taxon>
        <taxon>Pseudomonadati</taxon>
        <taxon>Pseudomonadota</taxon>
        <taxon>Gammaproteobacteria</taxon>
        <taxon>Enterobacterales</taxon>
        <taxon>Yersiniaceae</taxon>
        <taxon>Yersinia</taxon>
    </lineage>
</organism>
<evidence type="ECO:0000255" key="1">
    <source>
        <dbReference type="HAMAP-Rule" id="MF_00390"/>
    </source>
</evidence>
<gene>
    <name evidence="1" type="primary">tusD</name>
    <name type="ordered locus">YPA_3275</name>
</gene>
<feature type="chain" id="PRO_1000013258" description="Sulfurtransferase TusD">
    <location>
        <begin position="1"/>
        <end position="131"/>
    </location>
</feature>
<feature type="active site" description="Cysteine persulfide intermediate" evidence="1">
    <location>
        <position position="81"/>
    </location>
</feature>
<comment type="function">
    <text evidence="1">Part of a sulfur-relay system required for 2-thiolation of 5-methylaminomethyl-2-thiouridine (mnm(5)s(2)U) at tRNA wobble positions. Accepts sulfur from TusA and transfers it in turn to TusE.</text>
</comment>
<comment type="subunit">
    <text evidence="1">Heterohexamer, formed by a dimer of trimers. The hexameric TusBCD complex contains 2 copies each of TusB, TusC and TusD. The TusBCD complex interacts with TusE.</text>
</comment>
<comment type="subcellular location">
    <subcellularLocation>
        <location evidence="1">Cytoplasm</location>
    </subcellularLocation>
</comment>
<comment type="similarity">
    <text evidence="1">Belongs to the DsrE/TusD family.</text>
</comment>
<proteinExistence type="inferred from homology"/>
<name>TUSD_YERPA</name>
<protein>
    <recommendedName>
        <fullName evidence="1">Sulfurtransferase TusD</fullName>
        <ecNumber evidence="1">2.8.1.-</ecNumber>
    </recommendedName>
    <alternativeName>
        <fullName evidence="1">tRNA 2-thiouridine synthesizing protein D</fullName>
    </alternativeName>
</protein>
<accession>Q1C2T5</accession>
<dbReference type="EC" id="2.8.1.-" evidence="1"/>
<dbReference type="EMBL" id="CP000308">
    <property type="protein sequence ID" value="ABG15237.1"/>
    <property type="molecule type" value="Genomic_DNA"/>
</dbReference>
<dbReference type="RefSeq" id="WP_002212320.1">
    <property type="nucleotide sequence ID" value="NZ_CP009906.1"/>
</dbReference>
<dbReference type="SMR" id="Q1C2T5"/>
<dbReference type="GeneID" id="57974406"/>
<dbReference type="KEGG" id="ypa:YPA_3275"/>
<dbReference type="Proteomes" id="UP000001971">
    <property type="component" value="Chromosome"/>
</dbReference>
<dbReference type="GO" id="GO:1990228">
    <property type="term" value="C:sulfurtransferase complex"/>
    <property type="evidence" value="ECO:0007669"/>
    <property type="project" value="TreeGrafter"/>
</dbReference>
<dbReference type="GO" id="GO:0097163">
    <property type="term" value="F:sulfur carrier activity"/>
    <property type="evidence" value="ECO:0007669"/>
    <property type="project" value="TreeGrafter"/>
</dbReference>
<dbReference type="GO" id="GO:0016783">
    <property type="term" value="F:sulfurtransferase activity"/>
    <property type="evidence" value="ECO:0007669"/>
    <property type="project" value="UniProtKB-UniRule"/>
</dbReference>
<dbReference type="GO" id="GO:0002143">
    <property type="term" value="P:tRNA wobble position uridine thiolation"/>
    <property type="evidence" value="ECO:0007669"/>
    <property type="project" value="TreeGrafter"/>
</dbReference>
<dbReference type="FunFam" id="3.40.1260.10:FF:000001">
    <property type="entry name" value="Sulfurtransferase TusD"/>
    <property type="match status" value="1"/>
</dbReference>
<dbReference type="Gene3D" id="3.40.1260.10">
    <property type="entry name" value="DsrEFH-like"/>
    <property type="match status" value="1"/>
</dbReference>
<dbReference type="HAMAP" id="MF_00390">
    <property type="entry name" value="Thiourid_synth_D"/>
    <property type="match status" value="1"/>
</dbReference>
<dbReference type="InterPro" id="IPR027396">
    <property type="entry name" value="DsrEFH-like"/>
</dbReference>
<dbReference type="InterPro" id="IPR003787">
    <property type="entry name" value="Sulphur_relay_DsrE/F-like"/>
</dbReference>
<dbReference type="InterPro" id="IPR017463">
    <property type="entry name" value="Sulphur_relay_TusD/DsrE"/>
</dbReference>
<dbReference type="NCBIfam" id="NF001237">
    <property type="entry name" value="PRK00207.1"/>
    <property type="match status" value="1"/>
</dbReference>
<dbReference type="NCBIfam" id="TIGR03012">
    <property type="entry name" value="sulf_tusD_dsrE"/>
    <property type="match status" value="1"/>
</dbReference>
<dbReference type="PANTHER" id="PTHR34874">
    <property type="entry name" value="PROTEIN YCHN"/>
    <property type="match status" value="1"/>
</dbReference>
<dbReference type="PANTHER" id="PTHR34874:SF3">
    <property type="entry name" value="SULFURTRANSFERASE TUSD"/>
    <property type="match status" value="1"/>
</dbReference>
<dbReference type="Pfam" id="PF02635">
    <property type="entry name" value="DsrE"/>
    <property type="match status" value="1"/>
</dbReference>
<dbReference type="SUPFAM" id="SSF75169">
    <property type="entry name" value="DsrEFH-like"/>
    <property type="match status" value="1"/>
</dbReference>